<organism>
    <name type="scientific">Bos taurus</name>
    <name type="common">Bovine</name>
    <dbReference type="NCBI Taxonomy" id="9913"/>
    <lineage>
        <taxon>Eukaryota</taxon>
        <taxon>Metazoa</taxon>
        <taxon>Chordata</taxon>
        <taxon>Craniata</taxon>
        <taxon>Vertebrata</taxon>
        <taxon>Euteleostomi</taxon>
        <taxon>Mammalia</taxon>
        <taxon>Eutheria</taxon>
        <taxon>Laurasiatheria</taxon>
        <taxon>Artiodactyla</taxon>
        <taxon>Ruminantia</taxon>
        <taxon>Pecora</taxon>
        <taxon>Bovidae</taxon>
        <taxon>Bovinae</taxon>
        <taxon>Bos</taxon>
    </lineage>
</organism>
<sequence>MAALYACTKCHQRFPFEALSQGQQLCKECRIAHPVVKCTYCRTEYQQESKTNTICKKCAQNVQLYGTPKPCQYCNIIAAFIGNKCQRCTNSEKKYGPPYSCEQCKQQCAFDRKDDRKKVDGKLLCWLCTLSYKRVLQKTKEQRKHLSSSSRASHHEKEQYSRLSGGSHYNSQKTLSTSSIQNEIPKKKSKFESITTNGDSFSPDLALDSPGTDHFVIIAQLKEEVATLKKMLHQKDQMILEKEKKITELKADFQYQESQMRAKMNQMEKTHKEVTEQLQAKNRELLKQAAALSKSKKSEKSGAITSP</sequence>
<keyword id="KW-0175">Coiled coil</keyword>
<keyword id="KW-1185">Reference proteome</keyword>
<protein>
    <recommendedName>
        <fullName>Protein FAM76A</fullName>
    </recommendedName>
</protein>
<name>FA76A_BOVIN</name>
<accession>Q5EA89</accession>
<reference key="1">
    <citation type="journal article" date="2005" name="BMC Genomics">
        <title>Characterization of 954 bovine full-CDS cDNA sequences.</title>
        <authorList>
            <person name="Harhay G.P."/>
            <person name="Sonstegard T.S."/>
            <person name="Keele J.W."/>
            <person name="Heaton M.P."/>
            <person name="Clawson M.L."/>
            <person name="Snelling W.M."/>
            <person name="Wiedmann R.T."/>
            <person name="Van Tassell C.P."/>
            <person name="Smith T.P.L."/>
        </authorList>
    </citation>
    <scope>NUCLEOTIDE SEQUENCE [LARGE SCALE MRNA]</scope>
</reference>
<feature type="chain" id="PRO_0000245759" description="Protein FAM76A">
    <location>
        <begin position="1"/>
        <end position="307"/>
    </location>
</feature>
<feature type="region of interest" description="Disordered" evidence="2">
    <location>
        <begin position="142"/>
        <end position="195"/>
    </location>
</feature>
<feature type="region of interest" description="Disordered" evidence="2">
    <location>
        <begin position="287"/>
        <end position="307"/>
    </location>
</feature>
<feature type="coiled-coil region" evidence="1">
    <location>
        <begin position="217"/>
        <end position="299"/>
    </location>
</feature>
<feature type="compositionally biased region" description="Polar residues" evidence="2">
    <location>
        <begin position="161"/>
        <end position="182"/>
    </location>
</feature>
<gene>
    <name type="primary">FAM76A</name>
</gene>
<dbReference type="EMBL" id="BT020680">
    <property type="protein sequence ID" value="AAX08697.1"/>
    <property type="molecule type" value="mRNA"/>
</dbReference>
<dbReference type="RefSeq" id="NP_001015660.1">
    <property type="nucleotide sequence ID" value="NM_001015660.1"/>
</dbReference>
<dbReference type="SMR" id="Q5EA89"/>
<dbReference type="FunCoup" id="Q5EA89">
    <property type="interactions" value="2434"/>
</dbReference>
<dbReference type="STRING" id="9913.ENSBTAP00000026131"/>
<dbReference type="PaxDb" id="9913-ENSBTAP00000026131"/>
<dbReference type="GeneID" id="535402"/>
<dbReference type="KEGG" id="bta:535402"/>
<dbReference type="CTD" id="199870"/>
<dbReference type="eggNOG" id="KOG3990">
    <property type="taxonomic scope" value="Eukaryota"/>
</dbReference>
<dbReference type="InParanoid" id="Q5EA89"/>
<dbReference type="OrthoDB" id="3689at2759"/>
<dbReference type="Proteomes" id="UP000009136">
    <property type="component" value="Unplaced"/>
</dbReference>
<dbReference type="GO" id="GO:0016607">
    <property type="term" value="C:nuclear speck"/>
    <property type="evidence" value="ECO:0000318"/>
    <property type="project" value="GO_Central"/>
</dbReference>
<dbReference type="GO" id="GO:0005654">
    <property type="term" value="C:nucleoplasm"/>
    <property type="evidence" value="ECO:0000250"/>
    <property type="project" value="UniProtKB"/>
</dbReference>
<dbReference type="InterPro" id="IPR032017">
    <property type="entry name" value="FAM76"/>
</dbReference>
<dbReference type="PANTHER" id="PTHR46176">
    <property type="entry name" value="LD21662P"/>
    <property type="match status" value="1"/>
</dbReference>
<dbReference type="PANTHER" id="PTHR46176:SF2">
    <property type="entry name" value="PROTEIN FAM76A"/>
    <property type="match status" value="1"/>
</dbReference>
<dbReference type="Pfam" id="PF16046">
    <property type="entry name" value="FAM76"/>
    <property type="match status" value="1"/>
</dbReference>
<evidence type="ECO:0000255" key="1"/>
<evidence type="ECO:0000256" key="2">
    <source>
        <dbReference type="SAM" id="MobiDB-lite"/>
    </source>
</evidence>
<evidence type="ECO:0000305" key="3"/>
<proteinExistence type="evidence at transcript level"/>
<comment type="similarity">
    <text evidence="3">Belongs to the FAM76 family.</text>
</comment>